<gene>
    <name evidence="1" type="primary">napA</name>
    <name type="ordered locus">STY2485</name>
    <name type="ordered locus">t0605</name>
</gene>
<sequence>MKLSRRSFMKANAVAAAAAAAGLSVPGVARAVVGQQEAIKWDKAPCRFCGTGCGVLVGTQQGRVVACQGDPDAPVNRGLNCIKGYFLPKIMYGKDRLTQPMLRMKDGSYHKDGEFTPVSWEQAFDVMEEKFKTALKEKGPEAIGMFGSGQWTIWEGYAAAKLFKAGFRSNNIDPNARHCMASAVVGFMRTFGMDEPMGCYDDIEQADAFVLWGSNMAEMHPILWSRITNRRLSDPNVKVAVLSTFQHRSFELADNGIVFTPQSDLVILNYIANYIIQNNAVNQDFFTKHVNLRKGATDIGYGLRPTHPLEKAAKNPGSDASEPMSFDEYKAFVAEYTLDKTAEMTGVPKDQLEQLAQLYADPNKRVISYWTMGFNQHTRGVWANNLVYNLHLLTGKISQPGCGPFSLTGQPSACGTAREVGTFSHRLPADMVVTNEKHRDICEKHWQIPAGTIPAKVGLHAVAQDRALKDGKLNVYWVMCNNNMQAGPNINEDRMPGWRDPRNFIIVSDPYPTVSALSADLILPTAMWVEKEGAYGNAERRTQFWRQQIKAPGEAKSDLWQLVQFSRRFKTEEVWPEALLAQKPELRGKTLYDVLFATPAVSKFPLSELKEDQLNDESRELGFYLQKGLFEEYAWFGRGHGHDLAPFDDYHNARGLRWPVVEGKETQWRYSEGNDPYVKAGEGYKFYGKPDGKAVIFALPFEPAAESPDNEYDLWLSTGRVLEHWHTGSMTRRVPELHRAFPEAVVFIHPLDAKARDLRRGDKVKVSSRRGEVISIVETRGRNRPPQGLVYMPFFDAAQLVNNLTLDATDPLSKETDFKKCAVKLAKV</sequence>
<protein>
    <recommendedName>
        <fullName evidence="1">Periplasmic nitrate reductase</fullName>
        <ecNumber evidence="1">1.9.6.1</ecNumber>
    </recommendedName>
</protein>
<reference key="1">
    <citation type="journal article" date="2001" name="Nature">
        <title>Complete genome sequence of a multiple drug resistant Salmonella enterica serovar Typhi CT18.</title>
        <authorList>
            <person name="Parkhill J."/>
            <person name="Dougan G."/>
            <person name="James K.D."/>
            <person name="Thomson N.R."/>
            <person name="Pickard D."/>
            <person name="Wain J."/>
            <person name="Churcher C.M."/>
            <person name="Mungall K.L."/>
            <person name="Bentley S.D."/>
            <person name="Holden M.T.G."/>
            <person name="Sebaihia M."/>
            <person name="Baker S."/>
            <person name="Basham D."/>
            <person name="Brooks K."/>
            <person name="Chillingworth T."/>
            <person name="Connerton P."/>
            <person name="Cronin A."/>
            <person name="Davis P."/>
            <person name="Davies R.M."/>
            <person name="Dowd L."/>
            <person name="White N."/>
            <person name="Farrar J."/>
            <person name="Feltwell T."/>
            <person name="Hamlin N."/>
            <person name="Haque A."/>
            <person name="Hien T.T."/>
            <person name="Holroyd S."/>
            <person name="Jagels K."/>
            <person name="Krogh A."/>
            <person name="Larsen T.S."/>
            <person name="Leather S."/>
            <person name="Moule S."/>
            <person name="O'Gaora P."/>
            <person name="Parry C."/>
            <person name="Quail M.A."/>
            <person name="Rutherford K.M."/>
            <person name="Simmonds M."/>
            <person name="Skelton J."/>
            <person name="Stevens K."/>
            <person name="Whitehead S."/>
            <person name="Barrell B.G."/>
        </authorList>
    </citation>
    <scope>NUCLEOTIDE SEQUENCE [LARGE SCALE GENOMIC DNA]</scope>
    <source>
        <strain>CT18</strain>
    </source>
</reference>
<reference key="2">
    <citation type="journal article" date="2003" name="J. Bacteriol.">
        <title>Comparative genomics of Salmonella enterica serovar Typhi strains Ty2 and CT18.</title>
        <authorList>
            <person name="Deng W."/>
            <person name="Liou S.-R."/>
            <person name="Plunkett G. III"/>
            <person name="Mayhew G.F."/>
            <person name="Rose D.J."/>
            <person name="Burland V."/>
            <person name="Kodoyianni V."/>
            <person name="Schwartz D.C."/>
            <person name="Blattner F.R."/>
        </authorList>
    </citation>
    <scope>NUCLEOTIDE SEQUENCE [LARGE SCALE GENOMIC DNA]</scope>
    <source>
        <strain>ATCC 700931 / Ty2</strain>
    </source>
</reference>
<organism>
    <name type="scientific">Salmonella typhi</name>
    <dbReference type="NCBI Taxonomy" id="90370"/>
    <lineage>
        <taxon>Bacteria</taxon>
        <taxon>Pseudomonadati</taxon>
        <taxon>Pseudomonadota</taxon>
        <taxon>Gammaproteobacteria</taxon>
        <taxon>Enterobacterales</taxon>
        <taxon>Enterobacteriaceae</taxon>
        <taxon>Salmonella</taxon>
    </lineage>
</organism>
<name>NAPA_SALTI</name>
<accession>Q8Z570</accession>
<accession>Q7CB62</accession>
<proteinExistence type="inferred from homology"/>
<dbReference type="EC" id="1.9.6.1" evidence="1"/>
<dbReference type="EMBL" id="AL513382">
    <property type="protein sequence ID" value="CAD07491.1"/>
    <property type="molecule type" value="Genomic_DNA"/>
</dbReference>
<dbReference type="EMBL" id="AE014613">
    <property type="protein sequence ID" value="AAO68310.1"/>
    <property type="molecule type" value="Genomic_DNA"/>
</dbReference>
<dbReference type="RefSeq" id="NP_456804.1">
    <property type="nucleotide sequence ID" value="NC_003198.1"/>
</dbReference>
<dbReference type="RefSeq" id="WP_000778090.1">
    <property type="nucleotide sequence ID" value="NZ_WSUR01000051.1"/>
</dbReference>
<dbReference type="SMR" id="Q8Z570"/>
<dbReference type="STRING" id="220341.gene:17586387"/>
<dbReference type="KEGG" id="stt:t0605"/>
<dbReference type="KEGG" id="sty:STY2485"/>
<dbReference type="PATRIC" id="fig|220341.7.peg.2516"/>
<dbReference type="eggNOG" id="COG0243">
    <property type="taxonomic scope" value="Bacteria"/>
</dbReference>
<dbReference type="HOGENOM" id="CLU_000422_13_4_6"/>
<dbReference type="OMA" id="GMNAHQH"/>
<dbReference type="OrthoDB" id="9816402at2"/>
<dbReference type="Proteomes" id="UP000000541">
    <property type="component" value="Chromosome"/>
</dbReference>
<dbReference type="Proteomes" id="UP000002670">
    <property type="component" value="Chromosome"/>
</dbReference>
<dbReference type="GO" id="GO:0016020">
    <property type="term" value="C:membrane"/>
    <property type="evidence" value="ECO:0007669"/>
    <property type="project" value="TreeGrafter"/>
</dbReference>
<dbReference type="GO" id="GO:0009325">
    <property type="term" value="C:nitrate reductase complex"/>
    <property type="evidence" value="ECO:0007669"/>
    <property type="project" value="TreeGrafter"/>
</dbReference>
<dbReference type="GO" id="GO:0042597">
    <property type="term" value="C:periplasmic space"/>
    <property type="evidence" value="ECO:0007669"/>
    <property type="project" value="UniProtKB-SubCell"/>
</dbReference>
<dbReference type="GO" id="GO:0051539">
    <property type="term" value="F:4 iron, 4 sulfur cluster binding"/>
    <property type="evidence" value="ECO:0007669"/>
    <property type="project" value="UniProtKB-KW"/>
</dbReference>
<dbReference type="GO" id="GO:0009055">
    <property type="term" value="F:electron transfer activity"/>
    <property type="evidence" value="ECO:0007669"/>
    <property type="project" value="UniProtKB-UniRule"/>
</dbReference>
<dbReference type="GO" id="GO:0005506">
    <property type="term" value="F:iron ion binding"/>
    <property type="evidence" value="ECO:0007669"/>
    <property type="project" value="UniProtKB-UniRule"/>
</dbReference>
<dbReference type="GO" id="GO:0030151">
    <property type="term" value="F:molybdenum ion binding"/>
    <property type="evidence" value="ECO:0007669"/>
    <property type="project" value="InterPro"/>
</dbReference>
<dbReference type="GO" id="GO:0043546">
    <property type="term" value="F:molybdopterin cofactor binding"/>
    <property type="evidence" value="ECO:0007669"/>
    <property type="project" value="InterPro"/>
</dbReference>
<dbReference type="GO" id="GO:0050140">
    <property type="term" value="F:nitrate reductase (cytochrome) activity"/>
    <property type="evidence" value="ECO:0007669"/>
    <property type="project" value="UniProtKB-EC"/>
</dbReference>
<dbReference type="GO" id="GO:0045333">
    <property type="term" value="P:cellular respiration"/>
    <property type="evidence" value="ECO:0007669"/>
    <property type="project" value="UniProtKB-ARBA"/>
</dbReference>
<dbReference type="GO" id="GO:0006777">
    <property type="term" value="P:Mo-molybdopterin cofactor biosynthetic process"/>
    <property type="evidence" value="ECO:0007669"/>
    <property type="project" value="UniProtKB-UniRule"/>
</dbReference>
<dbReference type="GO" id="GO:0042128">
    <property type="term" value="P:nitrate assimilation"/>
    <property type="evidence" value="ECO:0007669"/>
    <property type="project" value="UniProtKB-UniRule"/>
</dbReference>
<dbReference type="CDD" id="cd02791">
    <property type="entry name" value="MopB_CT_Nitrate-R-NapA-like"/>
    <property type="match status" value="1"/>
</dbReference>
<dbReference type="CDD" id="cd02754">
    <property type="entry name" value="MopB_Nitrate-R-NapA-like"/>
    <property type="match status" value="1"/>
</dbReference>
<dbReference type="FunFam" id="2.40.40.20:FF:000005">
    <property type="entry name" value="Periplasmic nitrate reductase"/>
    <property type="match status" value="1"/>
</dbReference>
<dbReference type="FunFam" id="3.40.228.10:FF:000001">
    <property type="entry name" value="Periplasmic nitrate reductase"/>
    <property type="match status" value="1"/>
</dbReference>
<dbReference type="Gene3D" id="2.40.40.20">
    <property type="match status" value="1"/>
</dbReference>
<dbReference type="Gene3D" id="3.30.200.210">
    <property type="match status" value="1"/>
</dbReference>
<dbReference type="Gene3D" id="3.40.50.740">
    <property type="match status" value="1"/>
</dbReference>
<dbReference type="Gene3D" id="3.40.228.10">
    <property type="entry name" value="Dimethylsulfoxide Reductase, domain 2"/>
    <property type="match status" value="1"/>
</dbReference>
<dbReference type="HAMAP" id="MF_01630">
    <property type="entry name" value="Nitrate_reduct_NapA"/>
    <property type="match status" value="1"/>
</dbReference>
<dbReference type="InterPro" id="IPR009010">
    <property type="entry name" value="Asp_de-COase-like_dom_sf"/>
</dbReference>
<dbReference type="InterPro" id="IPR041957">
    <property type="entry name" value="CT_Nitrate-R-NapA-like"/>
</dbReference>
<dbReference type="InterPro" id="IPR006657">
    <property type="entry name" value="MoPterin_dinucl-bd_dom"/>
</dbReference>
<dbReference type="InterPro" id="IPR006656">
    <property type="entry name" value="Mopterin_OxRdtase"/>
</dbReference>
<dbReference type="InterPro" id="IPR006963">
    <property type="entry name" value="Mopterin_OxRdtase_4Fe-4S_dom"/>
</dbReference>
<dbReference type="InterPro" id="IPR027467">
    <property type="entry name" value="MopterinOxRdtase_cofactor_BS"/>
</dbReference>
<dbReference type="InterPro" id="IPR010051">
    <property type="entry name" value="Periplasm_NO3_reductase_lsu"/>
</dbReference>
<dbReference type="InterPro" id="IPR050123">
    <property type="entry name" value="Prok_molybdopt-oxidoreductase"/>
</dbReference>
<dbReference type="InterPro" id="IPR006311">
    <property type="entry name" value="TAT_signal"/>
</dbReference>
<dbReference type="InterPro" id="IPR019546">
    <property type="entry name" value="TAT_signal_bac_arc"/>
</dbReference>
<dbReference type="NCBIfam" id="TIGR01706">
    <property type="entry name" value="NAPA"/>
    <property type="match status" value="1"/>
</dbReference>
<dbReference type="NCBIfam" id="NF010055">
    <property type="entry name" value="PRK13532.1"/>
    <property type="match status" value="1"/>
</dbReference>
<dbReference type="NCBIfam" id="TIGR01409">
    <property type="entry name" value="TAT_signal_seq"/>
    <property type="match status" value="1"/>
</dbReference>
<dbReference type="PANTHER" id="PTHR43105:SF11">
    <property type="entry name" value="PERIPLASMIC NITRATE REDUCTASE"/>
    <property type="match status" value="1"/>
</dbReference>
<dbReference type="PANTHER" id="PTHR43105">
    <property type="entry name" value="RESPIRATORY NITRATE REDUCTASE"/>
    <property type="match status" value="1"/>
</dbReference>
<dbReference type="Pfam" id="PF04879">
    <property type="entry name" value="Molybdop_Fe4S4"/>
    <property type="match status" value="1"/>
</dbReference>
<dbReference type="Pfam" id="PF00384">
    <property type="entry name" value="Molybdopterin"/>
    <property type="match status" value="1"/>
</dbReference>
<dbReference type="Pfam" id="PF01568">
    <property type="entry name" value="Molydop_binding"/>
    <property type="match status" value="1"/>
</dbReference>
<dbReference type="SMART" id="SM00926">
    <property type="entry name" value="Molybdop_Fe4S4"/>
    <property type="match status" value="1"/>
</dbReference>
<dbReference type="SUPFAM" id="SSF50692">
    <property type="entry name" value="ADC-like"/>
    <property type="match status" value="1"/>
</dbReference>
<dbReference type="SUPFAM" id="SSF53706">
    <property type="entry name" value="Formate dehydrogenase/DMSO reductase, domains 1-3"/>
    <property type="match status" value="1"/>
</dbReference>
<dbReference type="PROSITE" id="PS51669">
    <property type="entry name" value="4FE4S_MOW_BIS_MGD"/>
    <property type="match status" value="1"/>
</dbReference>
<dbReference type="PROSITE" id="PS00551">
    <property type="entry name" value="MOLYBDOPTERIN_PROK_1"/>
    <property type="match status" value="1"/>
</dbReference>
<dbReference type="PROSITE" id="PS51318">
    <property type="entry name" value="TAT"/>
    <property type="match status" value="1"/>
</dbReference>
<feature type="signal peptide" description="Tat-type signal" evidence="1">
    <location>
        <begin position="1"/>
        <end position="31"/>
    </location>
</feature>
<feature type="chain" id="PRO_0000046001" description="Periplasmic nitrate reductase" evidence="1">
    <location>
        <begin position="32"/>
        <end position="828"/>
    </location>
</feature>
<feature type="domain" description="4Fe-4S Mo/W bis-MGD-type" evidence="1">
    <location>
        <begin position="39"/>
        <end position="95"/>
    </location>
</feature>
<feature type="binding site" evidence="1">
    <location>
        <position position="46"/>
    </location>
    <ligand>
        <name>[4Fe-4S] cluster</name>
        <dbReference type="ChEBI" id="CHEBI:49883"/>
    </ligand>
</feature>
<feature type="binding site" evidence="1">
    <location>
        <position position="49"/>
    </location>
    <ligand>
        <name>[4Fe-4S] cluster</name>
        <dbReference type="ChEBI" id="CHEBI:49883"/>
    </ligand>
</feature>
<feature type="binding site" evidence="1">
    <location>
        <position position="53"/>
    </location>
    <ligand>
        <name>[4Fe-4S] cluster</name>
        <dbReference type="ChEBI" id="CHEBI:49883"/>
    </ligand>
</feature>
<feature type="binding site" evidence="1">
    <location>
        <position position="81"/>
    </location>
    <ligand>
        <name>[4Fe-4S] cluster</name>
        <dbReference type="ChEBI" id="CHEBI:49883"/>
    </ligand>
</feature>
<feature type="binding site" evidence="1">
    <location>
        <position position="83"/>
    </location>
    <ligand>
        <name>Mo-bis(molybdopterin guanine dinucleotide)</name>
        <dbReference type="ChEBI" id="CHEBI:60539"/>
    </ligand>
</feature>
<feature type="binding site" evidence="1">
    <location>
        <position position="150"/>
    </location>
    <ligand>
        <name>Mo-bis(molybdopterin guanine dinucleotide)</name>
        <dbReference type="ChEBI" id="CHEBI:60539"/>
    </ligand>
</feature>
<feature type="binding site" evidence="1">
    <location>
        <position position="175"/>
    </location>
    <ligand>
        <name>Mo-bis(molybdopterin guanine dinucleotide)</name>
        <dbReference type="ChEBI" id="CHEBI:60539"/>
    </ligand>
</feature>
<feature type="binding site" evidence="1">
    <location>
        <position position="179"/>
    </location>
    <ligand>
        <name>Mo-bis(molybdopterin guanine dinucleotide)</name>
        <dbReference type="ChEBI" id="CHEBI:60539"/>
    </ligand>
</feature>
<feature type="binding site" evidence="1">
    <location>
        <begin position="212"/>
        <end position="219"/>
    </location>
    <ligand>
        <name>Mo-bis(molybdopterin guanine dinucleotide)</name>
        <dbReference type="ChEBI" id="CHEBI:60539"/>
    </ligand>
</feature>
<feature type="binding site" evidence="1">
    <location>
        <begin position="243"/>
        <end position="247"/>
    </location>
    <ligand>
        <name>Mo-bis(molybdopterin guanine dinucleotide)</name>
        <dbReference type="ChEBI" id="CHEBI:60539"/>
    </ligand>
</feature>
<feature type="binding site" evidence="1">
    <location>
        <begin position="262"/>
        <end position="264"/>
    </location>
    <ligand>
        <name>Mo-bis(molybdopterin guanine dinucleotide)</name>
        <dbReference type="ChEBI" id="CHEBI:60539"/>
    </ligand>
</feature>
<feature type="binding site" evidence="1">
    <location>
        <position position="372"/>
    </location>
    <ligand>
        <name>Mo-bis(molybdopterin guanine dinucleotide)</name>
        <dbReference type="ChEBI" id="CHEBI:60539"/>
    </ligand>
</feature>
<feature type="binding site" evidence="1">
    <location>
        <position position="376"/>
    </location>
    <ligand>
        <name>Mo-bis(molybdopterin guanine dinucleotide)</name>
        <dbReference type="ChEBI" id="CHEBI:60539"/>
    </ligand>
</feature>
<feature type="binding site" evidence="1">
    <location>
        <position position="482"/>
    </location>
    <ligand>
        <name>Mo-bis(molybdopterin guanine dinucleotide)</name>
        <dbReference type="ChEBI" id="CHEBI:60539"/>
    </ligand>
</feature>
<feature type="binding site" evidence="1">
    <location>
        <begin position="508"/>
        <end position="509"/>
    </location>
    <ligand>
        <name>Mo-bis(molybdopterin guanine dinucleotide)</name>
        <dbReference type="ChEBI" id="CHEBI:60539"/>
    </ligand>
</feature>
<feature type="binding site" evidence="1">
    <location>
        <position position="531"/>
    </location>
    <ligand>
        <name>Mo-bis(molybdopterin guanine dinucleotide)</name>
        <dbReference type="ChEBI" id="CHEBI:60539"/>
    </ligand>
</feature>
<feature type="binding site" evidence="1">
    <location>
        <position position="558"/>
    </location>
    <ligand>
        <name>Mo-bis(molybdopterin guanine dinucleotide)</name>
        <dbReference type="ChEBI" id="CHEBI:60539"/>
    </ligand>
</feature>
<feature type="binding site" evidence="1">
    <location>
        <begin position="718"/>
        <end position="727"/>
    </location>
    <ligand>
        <name>Mo-bis(molybdopterin guanine dinucleotide)</name>
        <dbReference type="ChEBI" id="CHEBI:60539"/>
    </ligand>
</feature>
<feature type="binding site" evidence="1">
    <location>
        <position position="794"/>
    </location>
    <ligand>
        <name>substrate</name>
    </ligand>
</feature>
<feature type="binding site" evidence="1">
    <location>
        <position position="802"/>
    </location>
    <ligand>
        <name>Mo-bis(molybdopterin guanine dinucleotide)</name>
        <dbReference type="ChEBI" id="CHEBI:60539"/>
    </ligand>
</feature>
<feature type="binding site" evidence="1">
    <location>
        <position position="819"/>
    </location>
    <ligand>
        <name>Mo-bis(molybdopterin guanine dinucleotide)</name>
        <dbReference type="ChEBI" id="CHEBI:60539"/>
    </ligand>
</feature>
<keyword id="KW-0004">4Fe-4S</keyword>
<keyword id="KW-0249">Electron transport</keyword>
<keyword id="KW-0408">Iron</keyword>
<keyword id="KW-0411">Iron-sulfur</keyword>
<keyword id="KW-0479">Metal-binding</keyword>
<keyword id="KW-0500">Molybdenum</keyword>
<keyword id="KW-0534">Nitrate assimilation</keyword>
<keyword id="KW-0560">Oxidoreductase</keyword>
<keyword id="KW-0574">Periplasm</keyword>
<keyword id="KW-0732">Signal</keyword>
<keyword id="KW-0813">Transport</keyword>
<evidence type="ECO:0000255" key="1">
    <source>
        <dbReference type="HAMAP-Rule" id="MF_01630"/>
    </source>
</evidence>
<comment type="function">
    <text evidence="1">Catalytic subunit of the periplasmic nitrate reductase complex NapAB. Receives electrons from NapB and catalyzes the reduction of nitrate to nitrite.</text>
</comment>
<comment type="catalytic activity">
    <reaction evidence="1">
        <text>2 Fe(II)-[cytochrome] + nitrate + 2 H(+) = 2 Fe(III)-[cytochrome] + nitrite + H2O</text>
        <dbReference type="Rhea" id="RHEA:12909"/>
        <dbReference type="Rhea" id="RHEA-COMP:11777"/>
        <dbReference type="Rhea" id="RHEA-COMP:11778"/>
        <dbReference type="ChEBI" id="CHEBI:15377"/>
        <dbReference type="ChEBI" id="CHEBI:15378"/>
        <dbReference type="ChEBI" id="CHEBI:16301"/>
        <dbReference type="ChEBI" id="CHEBI:17632"/>
        <dbReference type="ChEBI" id="CHEBI:29033"/>
        <dbReference type="ChEBI" id="CHEBI:29034"/>
        <dbReference type="EC" id="1.9.6.1"/>
    </reaction>
</comment>
<comment type="cofactor">
    <cofactor evidence="1">
        <name>[4Fe-4S] cluster</name>
        <dbReference type="ChEBI" id="CHEBI:49883"/>
    </cofactor>
    <text evidence="1">Binds 1 [4Fe-4S] cluster.</text>
</comment>
<comment type="cofactor">
    <cofactor evidence="1">
        <name>Mo-bis(molybdopterin guanine dinucleotide)</name>
        <dbReference type="ChEBI" id="CHEBI:60539"/>
    </cofactor>
    <text evidence="1">Binds 1 molybdenum-bis(molybdopterin guanine dinucleotide) (Mo-bis-MGD) cofactor per subunit.</text>
</comment>
<comment type="subunit">
    <text evidence="1">Component of the periplasmic nitrate reductase NapAB complex composed of NapA and NapB.</text>
</comment>
<comment type="subcellular location">
    <subcellularLocation>
        <location evidence="1">Periplasm</location>
    </subcellularLocation>
</comment>
<comment type="PTM">
    <text evidence="1">Predicted to be exported by the Tat system. The position of the signal peptide cleavage has not been experimentally proven.</text>
</comment>
<comment type="similarity">
    <text evidence="1">Belongs to the prokaryotic molybdopterin-containing oxidoreductase family. NasA/NapA/NarB subfamily.</text>
</comment>